<feature type="chain" id="PRO_0000161676" description="Basic phospholipase A2 notechis II-5">
    <location>
        <begin position="1"/>
        <end position="119"/>
    </location>
</feature>
<feature type="active site" evidence="1">
    <location>
        <position position="48"/>
    </location>
</feature>
<feature type="active site" evidence="1">
    <location>
        <position position="93"/>
    </location>
</feature>
<feature type="binding site" evidence="2">
    <location>
        <position position="28"/>
    </location>
    <ligand>
        <name>Ca(2+)</name>
        <dbReference type="ChEBI" id="CHEBI:29108"/>
    </ligand>
</feature>
<feature type="binding site" evidence="2">
    <location>
        <position position="30"/>
    </location>
    <ligand>
        <name>Ca(2+)</name>
        <dbReference type="ChEBI" id="CHEBI:29108"/>
    </ligand>
</feature>
<feature type="binding site" evidence="2">
    <location>
        <position position="32"/>
    </location>
    <ligand>
        <name>Ca(2+)</name>
        <dbReference type="ChEBI" id="CHEBI:29108"/>
    </ligand>
</feature>
<feature type="binding site" evidence="2">
    <location>
        <position position="49"/>
    </location>
    <ligand>
        <name>Ca(2+)</name>
        <dbReference type="ChEBI" id="CHEBI:29108"/>
    </ligand>
</feature>
<feature type="disulfide bond" evidence="5 7">
    <location>
        <begin position="11"/>
        <end position="71"/>
    </location>
</feature>
<feature type="disulfide bond" evidence="5 7">
    <location>
        <begin position="27"/>
        <end position="118"/>
    </location>
</feature>
<feature type="disulfide bond" evidence="5 7">
    <location>
        <begin position="29"/>
        <end position="45"/>
    </location>
</feature>
<feature type="disulfide bond" evidence="5 7">
    <location>
        <begin position="44"/>
        <end position="99"/>
    </location>
</feature>
<feature type="disulfide bond" evidence="5 7">
    <location>
        <begin position="51"/>
        <end position="92"/>
    </location>
</feature>
<feature type="disulfide bond" evidence="5 7">
    <location>
        <begin position="60"/>
        <end position="85"/>
    </location>
</feature>
<feature type="disulfide bond" evidence="5 7">
    <location>
        <begin position="78"/>
        <end position="90"/>
    </location>
</feature>
<feature type="helix" evidence="8">
    <location>
        <begin position="2"/>
        <end position="13"/>
    </location>
</feature>
<feature type="helix" evidence="8">
    <location>
        <begin position="19"/>
        <end position="22"/>
    </location>
</feature>
<feature type="turn" evidence="8">
    <location>
        <begin position="26"/>
        <end position="30"/>
    </location>
</feature>
<feature type="helix" evidence="8">
    <location>
        <begin position="40"/>
        <end position="57"/>
    </location>
</feature>
<feature type="turn" evidence="8">
    <location>
        <begin position="62"/>
        <end position="64"/>
    </location>
</feature>
<feature type="strand" evidence="8">
    <location>
        <begin position="69"/>
        <end position="72"/>
    </location>
</feature>
<feature type="strand" evidence="8">
    <location>
        <begin position="75"/>
        <end position="78"/>
    </location>
</feature>
<feature type="strand" evidence="8">
    <location>
        <begin position="81"/>
        <end position="83"/>
    </location>
</feature>
<feature type="helix" evidence="8">
    <location>
        <begin position="84"/>
        <end position="102"/>
    </location>
</feature>
<feature type="helix" evidence="8">
    <location>
        <begin position="107"/>
        <end position="109"/>
    </location>
</feature>
<feature type="helix" evidence="8">
    <location>
        <begin position="114"/>
        <end position="117"/>
    </location>
</feature>
<evidence type="ECO:0000250" key="1">
    <source>
        <dbReference type="UniProtKB" id="P00608"/>
    </source>
</evidence>
<evidence type="ECO:0000250" key="2">
    <source>
        <dbReference type="UniProtKB" id="P60043"/>
    </source>
</evidence>
<evidence type="ECO:0000255" key="3">
    <source>
        <dbReference type="PROSITE-ProRule" id="PRU10035"/>
    </source>
</evidence>
<evidence type="ECO:0000255" key="4">
    <source>
        <dbReference type="PROSITE-ProRule" id="PRU10036"/>
    </source>
</evidence>
<evidence type="ECO:0000269" key="5">
    <source>
    </source>
</evidence>
<evidence type="ECO:0000305" key="6"/>
<evidence type="ECO:0007744" key="7">
    <source>
        <dbReference type="PDB" id="2NOT"/>
    </source>
</evidence>
<evidence type="ECO:0007829" key="8">
    <source>
        <dbReference type="PDB" id="2NOT"/>
    </source>
</evidence>
<comment type="function">
    <text>Snake venom phospholipase A2 (PLA2) that inhibits neuromuscular transmission by blocking acetylcholine release from the nerve termini. Notechis II-5 is less toxic than notexin but has a higher specific phospholipase activity. PLA2 catalyzes the calcium-dependent hydrolysis of the 2-acyl groups in 3-sn-phosphoglycerides.</text>
</comment>
<comment type="catalytic activity">
    <reaction evidence="3 4">
        <text>a 1,2-diacyl-sn-glycero-3-phosphocholine + H2O = a 1-acyl-sn-glycero-3-phosphocholine + a fatty acid + H(+)</text>
        <dbReference type="Rhea" id="RHEA:15801"/>
        <dbReference type="ChEBI" id="CHEBI:15377"/>
        <dbReference type="ChEBI" id="CHEBI:15378"/>
        <dbReference type="ChEBI" id="CHEBI:28868"/>
        <dbReference type="ChEBI" id="CHEBI:57643"/>
        <dbReference type="ChEBI" id="CHEBI:58168"/>
        <dbReference type="EC" id="3.1.1.4"/>
    </reaction>
</comment>
<comment type="cofactor">
    <cofactor evidence="2">
        <name>Ca(2+)</name>
        <dbReference type="ChEBI" id="CHEBI:29108"/>
    </cofactor>
    <text evidence="2">Binds 1 Ca(2+) ion.</text>
</comment>
<comment type="subcellular location">
    <subcellularLocation>
        <location>Secreted</location>
    </subcellularLocation>
</comment>
<comment type="tissue specificity">
    <text>Expressed by the venom gland.</text>
</comment>
<comment type="toxic dose">
    <text>LD(50) is 0.045 mg/kg by intravenous injection.</text>
</comment>
<comment type="similarity">
    <text evidence="6">Belongs to the phospholipase A2 family. Group I subfamily. D49 sub-subfamily.</text>
</comment>
<sequence length="119" mass="13676">NLVQFSYLIQCANHGRRPTRHYMDYGCYCGWGGSGTPVDELDRCCKIHDDCYSDAEKKGCSPKMSAYDYYCGENGPYCRNIKKKCLRFVCDCDVEAAFCFAKAPYNNANWNIDTKKRCQ</sequence>
<keyword id="KW-0002">3D-structure</keyword>
<keyword id="KW-0106">Calcium</keyword>
<keyword id="KW-0903">Direct protein sequencing</keyword>
<keyword id="KW-1015">Disulfide bond</keyword>
<keyword id="KW-0378">Hydrolase</keyword>
<keyword id="KW-0442">Lipid degradation</keyword>
<keyword id="KW-0443">Lipid metabolism</keyword>
<keyword id="KW-0479">Metal-binding</keyword>
<keyword id="KW-0528">Neurotoxin</keyword>
<keyword id="KW-0638">Presynaptic neurotoxin</keyword>
<keyword id="KW-0964">Secreted</keyword>
<keyword id="KW-0800">Toxin</keyword>
<proteinExistence type="evidence at protein level"/>
<dbReference type="EC" id="3.1.1.4"/>
<dbReference type="PIR" id="A00750">
    <property type="entry name" value="PSNOA5"/>
</dbReference>
<dbReference type="PDB" id="2NOT">
    <property type="method" value="X-ray"/>
    <property type="resolution" value="3.00 A"/>
    <property type="chains" value="A/B=1-119"/>
</dbReference>
<dbReference type="PDBsum" id="2NOT"/>
<dbReference type="SMR" id="P00609"/>
<dbReference type="EvolutionaryTrace" id="P00609"/>
<dbReference type="GO" id="GO:0005576">
    <property type="term" value="C:extracellular region"/>
    <property type="evidence" value="ECO:0007669"/>
    <property type="project" value="UniProtKB-SubCell"/>
</dbReference>
<dbReference type="GO" id="GO:0005509">
    <property type="term" value="F:calcium ion binding"/>
    <property type="evidence" value="ECO:0007669"/>
    <property type="project" value="InterPro"/>
</dbReference>
<dbReference type="GO" id="GO:0047498">
    <property type="term" value="F:calcium-dependent phospholipase A2 activity"/>
    <property type="evidence" value="ECO:0007669"/>
    <property type="project" value="TreeGrafter"/>
</dbReference>
<dbReference type="GO" id="GO:0005543">
    <property type="term" value="F:phospholipid binding"/>
    <property type="evidence" value="ECO:0007669"/>
    <property type="project" value="TreeGrafter"/>
</dbReference>
<dbReference type="GO" id="GO:0090729">
    <property type="term" value="F:toxin activity"/>
    <property type="evidence" value="ECO:0007669"/>
    <property type="project" value="UniProtKB-KW"/>
</dbReference>
<dbReference type="GO" id="GO:0050482">
    <property type="term" value="P:arachidonate secretion"/>
    <property type="evidence" value="ECO:0007669"/>
    <property type="project" value="InterPro"/>
</dbReference>
<dbReference type="GO" id="GO:0016042">
    <property type="term" value="P:lipid catabolic process"/>
    <property type="evidence" value="ECO:0007669"/>
    <property type="project" value="UniProtKB-KW"/>
</dbReference>
<dbReference type="GO" id="GO:0006644">
    <property type="term" value="P:phospholipid metabolic process"/>
    <property type="evidence" value="ECO:0007669"/>
    <property type="project" value="InterPro"/>
</dbReference>
<dbReference type="CDD" id="cd00125">
    <property type="entry name" value="PLA2c"/>
    <property type="match status" value="1"/>
</dbReference>
<dbReference type="FunFam" id="1.20.90.10:FF:000007">
    <property type="entry name" value="Acidic phospholipase A2"/>
    <property type="match status" value="1"/>
</dbReference>
<dbReference type="Gene3D" id="1.20.90.10">
    <property type="entry name" value="Phospholipase A2 domain"/>
    <property type="match status" value="1"/>
</dbReference>
<dbReference type="InterPro" id="IPR001211">
    <property type="entry name" value="PLipase_A2"/>
</dbReference>
<dbReference type="InterPro" id="IPR033112">
    <property type="entry name" value="PLipase_A2_Asp_AS"/>
</dbReference>
<dbReference type="InterPro" id="IPR016090">
    <property type="entry name" value="PLipase_A2_dom"/>
</dbReference>
<dbReference type="InterPro" id="IPR036444">
    <property type="entry name" value="PLipase_A2_dom_sf"/>
</dbReference>
<dbReference type="InterPro" id="IPR033113">
    <property type="entry name" value="PLipase_A2_His_AS"/>
</dbReference>
<dbReference type="PANTHER" id="PTHR11716:SF106">
    <property type="entry name" value="PHOSPHOLIPASE A2 A2-ACTITOXIN-UCS2A-LIKE"/>
    <property type="match status" value="1"/>
</dbReference>
<dbReference type="PANTHER" id="PTHR11716">
    <property type="entry name" value="PHOSPHOLIPASE A2 FAMILY MEMBER"/>
    <property type="match status" value="1"/>
</dbReference>
<dbReference type="Pfam" id="PF00068">
    <property type="entry name" value="Phospholip_A2_1"/>
    <property type="match status" value="1"/>
</dbReference>
<dbReference type="PRINTS" id="PR00389">
    <property type="entry name" value="PHPHLIPASEA2"/>
</dbReference>
<dbReference type="SMART" id="SM00085">
    <property type="entry name" value="PA2c"/>
    <property type="match status" value="1"/>
</dbReference>
<dbReference type="SUPFAM" id="SSF48619">
    <property type="entry name" value="Phospholipase A2, PLA2"/>
    <property type="match status" value="1"/>
</dbReference>
<dbReference type="PROSITE" id="PS00119">
    <property type="entry name" value="PA2_ASP"/>
    <property type="match status" value="1"/>
</dbReference>
<dbReference type="PROSITE" id="PS00118">
    <property type="entry name" value="PA2_HIS"/>
    <property type="match status" value="1"/>
</dbReference>
<accession>P00609</accession>
<reference key="1">
    <citation type="journal article" date="1976" name="J. Biol. Chem.">
        <title>Isolation and amino acid sequence of a neurotoxic phospholipase A from the venom of the Australian tiger snake Notechis scutatus scutatus.</title>
        <authorList>
            <person name="Halpert J."/>
            <person name="Eaker D."/>
        </authorList>
    </citation>
    <scope>PROTEIN SEQUENCE</scope>
    <source>
        <tissue>Venom</tissue>
    </source>
</reference>
<reference key="2">
    <citation type="journal article" date="1998" name="Toxicon">
        <title>The three-dimensional structures of two toxins from snake venom throw light on the anticoagulant and neurotoxic sites of phospholipase A2.</title>
        <authorList>
            <person name="Carredano E."/>
            <person name="Westerlund B."/>
            <person name="Persson B."/>
            <person name="Saarinen M."/>
            <person name="Ramaswamy S."/>
            <person name="Eaker D."/>
            <person name="Eklund H."/>
        </authorList>
    </citation>
    <scope>X-RAY CRYSTALLOGRAPHY (2.2 ANGSTROMS)</scope>
    <source>
        <tissue>Venom</tissue>
    </source>
</reference>
<name>PA2B5_NOTSC</name>
<protein>
    <recommendedName>
        <fullName>Basic phospholipase A2 notechis II-5</fullName>
        <shortName>svPLA2</shortName>
        <ecNumber>3.1.1.4</ecNumber>
    </recommendedName>
    <alternativeName>
        <fullName>Phosphatidylcholine 2-acylhydrolase</fullName>
    </alternativeName>
</protein>
<organism>
    <name type="scientific">Notechis scutatus scutatus</name>
    <name type="common">Mainland tiger snake</name>
    <name type="synonym">Common tiger snake</name>
    <dbReference type="NCBI Taxonomy" id="70142"/>
    <lineage>
        <taxon>Eukaryota</taxon>
        <taxon>Metazoa</taxon>
        <taxon>Chordata</taxon>
        <taxon>Craniata</taxon>
        <taxon>Vertebrata</taxon>
        <taxon>Euteleostomi</taxon>
        <taxon>Lepidosauria</taxon>
        <taxon>Squamata</taxon>
        <taxon>Bifurcata</taxon>
        <taxon>Unidentata</taxon>
        <taxon>Episquamata</taxon>
        <taxon>Toxicofera</taxon>
        <taxon>Serpentes</taxon>
        <taxon>Colubroidea</taxon>
        <taxon>Elapidae</taxon>
        <taxon>Hydrophiinae</taxon>
        <taxon>Notechis</taxon>
    </lineage>
</organism>